<comment type="function">
    <text evidence="1">Forms part of the ribosomal stalk which helps the ribosome interact with GTP-bound translation factors.</text>
</comment>
<comment type="subunit">
    <text evidence="1">Part of the ribosomal stalk of the 50S ribosomal subunit. Interacts with L10 and the large rRNA to form the base of the stalk. L10 forms an elongated spine to which L12 dimers bind in a sequential fashion forming a multimeric L10(L12)X complex.</text>
</comment>
<comment type="PTM">
    <text evidence="1">One or more lysine residues are methylated.</text>
</comment>
<comment type="similarity">
    <text evidence="1">Belongs to the universal ribosomal protein uL11 family.</text>
</comment>
<proteinExistence type="inferred from homology"/>
<protein>
    <recommendedName>
        <fullName evidence="1">Large ribosomal subunit protein uL11</fullName>
    </recommendedName>
    <alternativeName>
        <fullName evidence="2">50S ribosomal protein L11</fullName>
    </alternativeName>
</protein>
<reference key="1">
    <citation type="submission" date="2002-03" db="EMBL/GenBank/DDBJ databases">
        <authorList>
            <person name="Skamrov A."/>
            <person name="Goldman M."/>
            <person name="Feoktistova E."/>
            <person name="Beabealashvilli R."/>
        </authorList>
    </citation>
    <scope>NUCLEOTIDE SEQUENCE [GENOMIC DNA]</scope>
    <source>
        <strain>A5969Var.B</strain>
    </source>
</reference>
<reference key="2">
    <citation type="journal article" date="2003" name="Microbiology">
        <title>The complete genome sequence of the avian pathogen Mycoplasma gallisepticum strain R(low).</title>
        <authorList>
            <person name="Papazisi L."/>
            <person name="Gorton T.S."/>
            <person name="Kutish G."/>
            <person name="Markham P.F."/>
            <person name="Browning G.F."/>
            <person name="Nguyen D.K."/>
            <person name="Swartzell S."/>
            <person name="Madan A."/>
            <person name="Mahairas G."/>
            <person name="Geary S.J."/>
        </authorList>
    </citation>
    <scope>NUCLEOTIDE SEQUENCE [LARGE SCALE GENOMIC DNA]</scope>
    <source>
        <strain>R(low / passage 15 / clone 2)</strain>
    </source>
</reference>
<organism>
    <name type="scientific">Mycoplasmoides gallisepticum (strain R(low / passage 15 / clone 2))</name>
    <name type="common">Mycoplasma gallisepticum</name>
    <dbReference type="NCBI Taxonomy" id="710127"/>
    <lineage>
        <taxon>Bacteria</taxon>
        <taxon>Bacillati</taxon>
        <taxon>Mycoplasmatota</taxon>
        <taxon>Mycoplasmoidales</taxon>
        <taxon>Mycoplasmoidaceae</taxon>
        <taxon>Mycoplasmoides</taxon>
    </lineage>
</organism>
<feature type="chain" id="PRO_0000104316" description="Large ribosomal subunit protein uL11">
    <location>
        <begin position="1"/>
        <end position="152"/>
    </location>
</feature>
<evidence type="ECO:0000255" key="1">
    <source>
        <dbReference type="HAMAP-Rule" id="MF_00736"/>
    </source>
</evidence>
<evidence type="ECO:0000305" key="2"/>
<keyword id="KW-0488">Methylation</keyword>
<keyword id="KW-1185">Reference proteome</keyword>
<keyword id="KW-0687">Ribonucleoprotein</keyword>
<keyword id="KW-0689">Ribosomal protein</keyword>
<keyword id="KW-0694">RNA-binding</keyword>
<keyword id="KW-0699">rRNA-binding</keyword>
<dbReference type="EMBL" id="AY081866">
    <property type="protein sequence ID" value="AAL91132.1"/>
    <property type="molecule type" value="Genomic_DNA"/>
</dbReference>
<dbReference type="EMBL" id="AE015450">
    <property type="protein sequence ID" value="AAP57014.1"/>
    <property type="molecule type" value="Genomic_DNA"/>
</dbReference>
<dbReference type="SMR" id="Q8RLD9"/>
<dbReference type="KEGG" id="mga:MGA_0503"/>
<dbReference type="HOGENOM" id="CLU_074237_2_2_14"/>
<dbReference type="OrthoDB" id="9802408at2"/>
<dbReference type="Proteomes" id="UP000001418">
    <property type="component" value="Chromosome"/>
</dbReference>
<dbReference type="GO" id="GO:0022625">
    <property type="term" value="C:cytosolic large ribosomal subunit"/>
    <property type="evidence" value="ECO:0007669"/>
    <property type="project" value="TreeGrafter"/>
</dbReference>
<dbReference type="GO" id="GO:0070180">
    <property type="term" value="F:large ribosomal subunit rRNA binding"/>
    <property type="evidence" value="ECO:0007669"/>
    <property type="project" value="UniProtKB-UniRule"/>
</dbReference>
<dbReference type="GO" id="GO:0003735">
    <property type="term" value="F:structural constituent of ribosome"/>
    <property type="evidence" value="ECO:0007669"/>
    <property type="project" value="InterPro"/>
</dbReference>
<dbReference type="GO" id="GO:0006412">
    <property type="term" value="P:translation"/>
    <property type="evidence" value="ECO:0007669"/>
    <property type="project" value="UniProtKB-UniRule"/>
</dbReference>
<dbReference type="CDD" id="cd00349">
    <property type="entry name" value="Ribosomal_L11"/>
    <property type="match status" value="1"/>
</dbReference>
<dbReference type="FunFam" id="1.10.10.250:FF:000001">
    <property type="entry name" value="50S ribosomal protein L11"/>
    <property type="match status" value="1"/>
</dbReference>
<dbReference type="Gene3D" id="1.10.10.250">
    <property type="entry name" value="Ribosomal protein L11, C-terminal domain"/>
    <property type="match status" value="1"/>
</dbReference>
<dbReference type="Gene3D" id="3.30.1550.10">
    <property type="entry name" value="Ribosomal protein L11/L12, N-terminal domain"/>
    <property type="match status" value="1"/>
</dbReference>
<dbReference type="HAMAP" id="MF_00736">
    <property type="entry name" value="Ribosomal_uL11"/>
    <property type="match status" value="1"/>
</dbReference>
<dbReference type="InterPro" id="IPR000911">
    <property type="entry name" value="Ribosomal_uL11"/>
</dbReference>
<dbReference type="InterPro" id="IPR006519">
    <property type="entry name" value="Ribosomal_uL11_bac-typ"/>
</dbReference>
<dbReference type="InterPro" id="IPR020783">
    <property type="entry name" value="Ribosomal_uL11_C"/>
</dbReference>
<dbReference type="InterPro" id="IPR036769">
    <property type="entry name" value="Ribosomal_uL11_C_sf"/>
</dbReference>
<dbReference type="InterPro" id="IPR020785">
    <property type="entry name" value="Ribosomal_uL11_CS"/>
</dbReference>
<dbReference type="InterPro" id="IPR020784">
    <property type="entry name" value="Ribosomal_uL11_N"/>
</dbReference>
<dbReference type="InterPro" id="IPR036796">
    <property type="entry name" value="Ribosomal_uL11_N_sf"/>
</dbReference>
<dbReference type="NCBIfam" id="TIGR01632">
    <property type="entry name" value="L11_bact"/>
    <property type="match status" value="1"/>
</dbReference>
<dbReference type="PANTHER" id="PTHR11661">
    <property type="entry name" value="60S RIBOSOMAL PROTEIN L12"/>
    <property type="match status" value="1"/>
</dbReference>
<dbReference type="PANTHER" id="PTHR11661:SF1">
    <property type="entry name" value="LARGE RIBOSOMAL SUBUNIT PROTEIN UL11M"/>
    <property type="match status" value="1"/>
</dbReference>
<dbReference type="Pfam" id="PF00298">
    <property type="entry name" value="Ribosomal_L11"/>
    <property type="match status" value="1"/>
</dbReference>
<dbReference type="Pfam" id="PF03946">
    <property type="entry name" value="Ribosomal_L11_N"/>
    <property type="match status" value="1"/>
</dbReference>
<dbReference type="SMART" id="SM00649">
    <property type="entry name" value="RL11"/>
    <property type="match status" value="1"/>
</dbReference>
<dbReference type="SUPFAM" id="SSF54747">
    <property type="entry name" value="Ribosomal L11/L12e N-terminal domain"/>
    <property type="match status" value="1"/>
</dbReference>
<dbReference type="SUPFAM" id="SSF46906">
    <property type="entry name" value="Ribosomal protein L11, C-terminal domain"/>
    <property type="match status" value="1"/>
</dbReference>
<dbReference type="PROSITE" id="PS00359">
    <property type="entry name" value="RIBOSOMAL_L11"/>
    <property type="match status" value="1"/>
</dbReference>
<accession>Q8RLD9</accession>
<gene>
    <name evidence="1" type="primary">rplK</name>
    <name evidence="1" type="synonym">rpl11</name>
    <name type="ordered locus">MYCGA6640</name>
    <name type="ORF">MGA_0503</name>
</gene>
<sequence>MLLVAKKEITRIAKLELIGGQAKPGPALASVGINMGEFTKQFNEKTKDRMGDVVPVIITAFNDKSFLFELKTTPVTVLLKKAAKIESGAKNPKTEKVGKISKAEALKIAEYKMADLNAYDTEAALRMIAGTAKQMGLEIEGVDPVTKSKKGS</sequence>
<name>RL11_MYCGA</name>